<protein>
    <recommendedName>
        <fullName evidence="1">S-adenosylmethionine synthase</fullName>
        <shortName evidence="1">AdoMet synthase</shortName>
        <ecNumber evidence="1">2.5.1.6</ecNumber>
    </recommendedName>
    <alternativeName>
        <fullName evidence="1">MAT</fullName>
    </alternativeName>
    <alternativeName>
        <fullName evidence="1">Methionine adenosyltransferase</fullName>
    </alternativeName>
</protein>
<feature type="chain" id="PRO_0000302987" description="S-adenosylmethionine synthase">
    <location>
        <begin position="1"/>
        <end position="398"/>
    </location>
</feature>
<feature type="region of interest" description="Flexible loop" evidence="1">
    <location>
        <begin position="100"/>
        <end position="110"/>
    </location>
</feature>
<feature type="binding site" description="in other chain" evidence="1">
    <location>
        <position position="16"/>
    </location>
    <ligand>
        <name>ATP</name>
        <dbReference type="ChEBI" id="CHEBI:30616"/>
        <note>ligand shared between two neighboring subunits</note>
    </ligand>
</feature>
<feature type="binding site" evidence="1">
    <location>
        <position position="18"/>
    </location>
    <ligand>
        <name>Mg(2+)</name>
        <dbReference type="ChEBI" id="CHEBI:18420"/>
    </ligand>
</feature>
<feature type="binding site" evidence="1">
    <location>
        <position position="44"/>
    </location>
    <ligand>
        <name>K(+)</name>
        <dbReference type="ChEBI" id="CHEBI:29103"/>
    </ligand>
</feature>
<feature type="binding site" description="in other chain" evidence="1">
    <location>
        <position position="57"/>
    </location>
    <ligand>
        <name>L-methionine</name>
        <dbReference type="ChEBI" id="CHEBI:57844"/>
        <note>ligand shared between two neighboring subunits</note>
    </ligand>
</feature>
<feature type="binding site" description="in other chain" evidence="1">
    <location>
        <position position="100"/>
    </location>
    <ligand>
        <name>L-methionine</name>
        <dbReference type="ChEBI" id="CHEBI:57844"/>
        <note>ligand shared between two neighboring subunits</note>
    </ligand>
</feature>
<feature type="binding site" description="in other chain" evidence="1">
    <location>
        <begin position="174"/>
        <end position="176"/>
    </location>
    <ligand>
        <name>ATP</name>
        <dbReference type="ChEBI" id="CHEBI:30616"/>
        <note>ligand shared between two neighboring subunits</note>
    </ligand>
</feature>
<feature type="binding site" description="in other chain" evidence="1">
    <location>
        <begin position="241"/>
        <end position="242"/>
    </location>
    <ligand>
        <name>ATP</name>
        <dbReference type="ChEBI" id="CHEBI:30616"/>
        <note>ligand shared between two neighboring subunits</note>
    </ligand>
</feature>
<feature type="binding site" evidence="1">
    <location>
        <position position="250"/>
    </location>
    <ligand>
        <name>ATP</name>
        <dbReference type="ChEBI" id="CHEBI:30616"/>
        <note>ligand shared between two neighboring subunits</note>
    </ligand>
</feature>
<feature type="binding site" evidence="1">
    <location>
        <position position="250"/>
    </location>
    <ligand>
        <name>L-methionine</name>
        <dbReference type="ChEBI" id="CHEBI:57844"/>
        <note>ligand shared between two neighboring subunits</note>
    </ligand>
</feature>
<feature type="binding site" description="in other chain" evidence="1">
    <location>
        <begin position="256"/>
        <end position="257"/>
    </location>
    <ligand>
        <name>ATP</name>
        <dbReference type="ChEBI" id="CHEBI:30616"/>
        <note>ligand shared between two neighboring subunits</note>
    </ligand>
</feature>
<feature type="binding site" evidence="1">
    <location>
        <position position="273"/>
    </location>
    <ligand>
        <name>ATP</name>
        <dbReference type="ChEBI" id="CHEBI:30616"/>
        <note>ligand shared between two neighboring subunits</note>
    </ligand>
</feature>
<feature type="binding site" evidence="1">
    <location>
        <position position="277"/>
    </location>
    <ligand>
        <name>ATP</name>
        <dbReference type="ChEBI" id="CHEBI:30616"/>
        <note>ligand shared between two neighboring subunits</note>
    </ligand>
</feature>
<feature type="binding site" description="in other chain" evidence="1">
    <location>
        <position position="281"/>
    </location>
    <ligand>
        <name>L-methionine</name>
        <dbReference type="ChEBI" id="CHEBI:57844"/>
        <note>ligand shared between two neighboring subunits</note>
    </ligand>
</feature>
<organism>
    <name type="scientific">Streptococcus pyogenes serotype M12 (strain MGAS2096)</name>
    <dbReference type="NCBI Taxonomy" id="370553"/>
    <lineage>
        <taxon>Bacteria</taxon>
        <taxon>Bacillati</taxon>
        <taxon>Bacillota</taxon>
        <taxon>Bacilli</taxon>
        <taxon>Lactobacillales</taxon>
        <taxon>Streptococcaceae</taxon>
        <taxon>Streptococcus</taxon>
    </lineage>
</organism>
<dbReference type="EC" id="2.5.1.6" evidence="1"/>
<dbReference type="EMBL" id="CP000261">
    <property type="protein sequence ID" value="ABF36222.1"/>
    <property type="molecule type" value="Genomic_DNA"/>
</dbReference>
<dbReference type="SMR" id="Q1JB36"/>
<dbReference type="KEGG" id="spj:MGAS2096_Spy1170"/>
<dbReference type="HOGENOM" id="CLU_041802_1_1_9"/>
<dbReference type="UniPathway" id="UPA00315">
    <property type="reaction ID" value="UER00080"/>
</dbReference>
<dbReference type="GO" id="GO:0005737">
    <property type="term" value="C:cytoplasm"/>
    <property type="evidence" value="ECO:0007669"/>
    <property type="project" value="UniProtKB-SubCell"/>
</dbReference>
<dbReference type="GO" id="GO:0005524">
    <property type="term" value="F:ATP binding"/>
    <property type="evidence" value="ECO:0007669"/>
    <property type="project" value="UniProtKB-UniRule"/>
</dbReference>
<dbReference type="GO" id="GO:0000287">
    <property type="term" value="F:magnesium ion binding"/>
    <property type="evidence" value="ECO:0007669"/>
    <property type="project" value="UniProtKB-UniRule"/>
</dbReference>
<dbReference type="GO" id="GO:0004478">
    <property type="term" value="F:methionine adenosyltransferase activity"/>
    <property type="evidence" value="ECO:0007669"/>
    <property type="project" value="UniProtKB-UniRule"/>
</dbReference>
<dbReference type="GO" id="GO:0006730">
    <property type="term" value="P:one-carbon metabolic process"/>
    <property type="evidence" value="ECO:0007669"/>
    <property type="project" value="UniProtKB-KW"/>
</dbReference>
<dbReference type="GO" id="GO:0006556">
    <property type="term" value="P:S-adenosylmethionine biosynthetic process"/>
    <property type="evidence" value="ECO:0007669"/>
    <property type="project" value="UniProtKB-UniRule"/>
</dbReference>
<dbReference type="CDD" id="cd18079">
    <property type="entry name" value="S-AdoMet_synt"/>
    <property type="match status" value="1"/>
</dbReference>
<dbReference type="FunFam" id="3.30.300.10:FF:000003">
    <property type="entry name" value="S-adenosylmethionine synthase"/>
    <property type="match status" value="1"/>
</dbReference>
<dbReference type="Gene3D" id="3.30.300.10">
    <property type="match status" value="3"/>
</dbReference>
<dbReference type="HAMAP" id="MF_00086">
    <property type="entry name" value="S_AdoMet_synth1"/>
    <property type="match status" value="1"/>
</dbReference>
<dbReference type="InterPro" id="IPR022631">
    <property type="entry name" value="ADOMET_SYNTHASE_CS"/>
</dbReference>
<dbReference type="InterPro" id="IPR022630">
    <property type="entry name" value="S-AdoMet_synt_C"/>
</dbReference>
<dbReference type="InterPro" id="IPR022629">
    <property type="entry name" value="S-AdoMet_synt_central"/>
</dbReference>
<dbReference type="InterPro" id="IPR022628">
    <property type="entry name" value="S-AdoMet_synt_N"/>
</dbReference>
<dbReference type="InterPro" id="IPR002133">
    <property type="entry name" value="S-AdoMet_synthetase"/>
</dbReference>
<dbReference type="InterPro" id="IPR022636">
    <property type="entry name" value="S-AdoMet_synthetase_sfam"/>
</dbReference>
<dbReference type="NCBIfam" id="TIGR01034">
    <property type="entry name" value="metK"/>
    <property type="match status" value="1"/>
</dbReference>
<dbReference type="PANTHER" id="PTHR11964">
    <property type="entry name" value="S-ADENOSYLMETHIONINE SYNTHETASE"/>
    <property type="match status" value="1"/>
</dbReference>
<dbReference type="Pfam" id="PF02773">
    <property type="entry name" value="S-AdoMet_synt_C"/>
    <property type="match status" value="1"/>
</dbReference>
<dbReference type="Pfam" id="PF02772">
    <property type="entry name" value="S-AdoMet_synt_M"/>
    <property type="match status" value="1"/>
</dbReference>
<dbReference type="Pfam" id="PF00438">
    <property type="entry name" value="S-AdoMet_synt_N"/>
    <property type="match status" value="1"/>
</dbReference>
<dbReference type="PIRSF" id="PIRSF000497">
    <property type="entry name" value="MAT"/>
    <property type="match status" value="1"/>
</dbReference>
<dbReference type="SUPFAM" id="SSF55973">
    <property type="entry name" value="S-adenosylmethionine synthetase"/>
    <property type="match status" value="3"/>
</dbReference>
<dbReference type="PROSITE" id="PS00376">
    <property type="entry name" value="ADOMET_SYNTHASE_1"/>
    <property type="match status" value="1"/>
</dbReference>
<dbReference type="PROSITE" id="PS00377">
    <property type="entry name" value="ADOMET_SYNTHASE_2"/>
    <property type="match status" value="1"/>
</dbReference>
<gene>
    <name evidence="1" type="primary">metK</name>
    <name type="ordered locus">MGAS2096_Spy1170</name>
</gene>
<proteinExistence type="inferred from homology"/>
<keyword id="KW-0067">ATP-binding</keyword>
<keyword id="KW-0963">Cytoplasm</keyword>
<keyword id="KW-0460">Magnesium</keyword>
<keyword id="KW-0479">Metal-binding</keyword>
<keyword id="KW-0547">Nucleotide-binding</keyword>
<keyword id="KW-0554">One-carbon metabolism</keyword>
<keyword id="KW-0630">Potassium</keyword>
<keyword id="KW-0808">Transferase</keyword>
<name>METK_STRPB</name>
<reference key="1">
    <citation type="journal article" date="2006" name="Proc. Natl. Acad. Sci. U.S.A.">
        <title>Molecular genetic anatomy of inter- and intraserotype variation in the human bacterial pathogen group A Streptococcus.</title>
        <authorList>
            <person name="Beres S.B."/>
            <person name="Richter E.W."/>
            <person name="Nagiec M.J."/>
            <person name="Sumby P."/>
            <person name="Porcella S.F."/>
            <person name="DeLeo F.R."/>
            <person name="Musser J.M."/>
        </authorList>
    </citation>
    <scope>NUCLEOTIDE SEQUENCE [LARGE SCALE GENOMIC DNA]</scope>
    <source>
        <strain>MGAS2096</strain>
    </source>
</reference>
<sequence length="398" mass="43117">MSERKLFTSESVSEGHPDKIADQISDAILDAILAEDPEAHVAAETCVYTGSVHVFGEISTTAYIDINRVVRDTIAEIGYTEAEYGFSAESVGVHPSLVEQSGDIAQGVNEALESREGDTDDLSHIGAGDQGLMFGFAINETPELMPLPISLSHQLVRRLAELRKSGEISYLRPDAKSQVTVEYDEHDKPVRVDTVVISTQHDPEATNDQIRQDVIEKVIKAVIPADYLDDDTKFFINPTGRFVIGGPQGDSGLTGRKIIVDTYGGYSRHGGGAFSGKDATKVDRSASYAARYIAKNLVAAGLATKAEVQLAYAIGVAQPVSVRVDTFGTSTVPEAVLEAAVRQVFDLRPAGIIQMLDLKRPIYKQTAAYGHMGRTDIDLPWERLNKVDALVEAVKTVL</sequence>
<comment type="function">
    <text evidence="1">Catalyzes the formation of S-adenosylmethionine (AdoMet) from methionine and ATP. The overall synthetic reaction is composed of two sequential steps, AdoMet formation and the subsequent tripolyphosphate hydrolysis which occurs prior to release of AdoMet from the enzyme.</text>
</comment>
<comment type="catalytic activity">
    <reaction evidence="1">
        <text>L-methionine + ATP + H2O = S-adenosyl-L-methionine + phosphate + diphosphate</text>
        <dbReference type="Rhea" id="RHEA:21080"/>
        <dbReference type="ChEBI" id="CHEBI:15377"/>
        <dbReference type="ChEBI" id="CHEBI:30616"/>
        <dbReference type="ChEBI" id="CHEBI:33019"/>
        <dbReference type="ChEBI" id="CHEBI:43474"/>
        <dbReference type="ChEBI" id="CHEBI:57844"/>
        <dbReference type="ChEBI" id="CHEBI:59789"/>
        <dbReference type="EC" id="2.5.1.6"/>
    </reaction>
</comment>
<comment type="cofactor">
    <cofactor evidence="1">
        <name>Mg(2+)</name>
        <dbReference type="ChEBI" id="CHEBI:18420"/>
    </cofactor>
    <text evidence="1">Binds 2 divalent ions per subunit.</text>
</comment>
<comment type="cofactor">
    <cofactor evidence="1">
        <name>K(+)</name>
        <dbReference type="ChEBI" id="CHEBI:29103"/>
    </cofactor>
    <text evidence="1">Binds 1 potassium ion per subunit.</text>
</comment>
<comment type="pathway">
    <text evidence="1">Amino-acid biosynthesis; S-adenosyl-L-methionine biosynthesis; S-adenosyl-L-methionine from L-methionine: step 1/1.</text>
</comment>
<comment type="subunit">
    <text evidence="1">Homotetramer; dimer of dimers.</text>
</comment>
<comment type="subcellular location">
    <subcellularLocation>
        <location evidence="1">Cytoplasm</location>
    </subcellularLocation>
</comment>
<comment type="similarity">
    <text evidence="1">Belongs to the AdoMet synthase family.</text>
</comment>
<evidence type="ECO:0000255" key="1">
    <source>
        <dbReference type="HAMAP-Rule" id="MF_00086"/>
    </source>
</evidence>
<accession>Q1JB36</accession>